<dbReference type="EC" id="4.2.3.114" evidence="5 9"/>
<dbReference type="EC" id="4.2.3.115" evidence="5 9"/>
<dbReference type="EMBL" id="GU385977">
    <property type="protein sequence ID" value="ADK73620.1"/>
    <property type="molecule type" value="mRNA"/>
</dbReference>
<dbReference type="EMBL" id="GU385978">
    <property type="protein sequence ID" value="ADK73621.1"/>
    <property type="molecule type" value="mRNA"/>
</dbReference>
<dbReference type="SMR" id="E2E2P0"/>
<dbReference type="BRENDA" id="4.2.3.114">
    <property type="organism ID" value="12977"/>
</dbReference>
<dbReference type="UniPathway" id="UPA00213"/>
<dbReference type="GO" id="GO:0009507">
    <property type="term" value="C:chloroplast"/>
    <property type="evidence" value="ECO:0007669"/>
    <property type="project" value="UniProtKB-SubCell"/>
</dbReference>
<dbReference type="GO" id="GO:0102903">
    <property type="term" value="F:gamma-terpinene synthase activity"/>
    <property type="evidence" value="ECO:0007669"/>
    <property type="project" value="UniProtKB-EC"/>
</dbReference>
<dbReference type="GO" id="GO:0000287">
    <property type="term" value="F:magnesium ion binding"/>
    <property type="evidence" value="ECO:0000314"/>
    <property type="project" value="UniProtKB"/>
</dbReference>
<dbReference type="GO" id="GO:0042803">
    <property type="term" value="F:protein homodimerization activity"/>
    <property type="evidence" value="ECO:0000250"/>
    <property type="project" value="UniProtKB"/>
</dbReference>
<dbReference type="GO" id="GO:0010333">
    <property type="term" value="F:terpene synthase activity"/>
    <property type="evidence" value="ECO:0000314"/>
    <property type="project" value="UniProtKB"/>
</dbReference>
<dbReference type="GO" id="GO:0002213">
    <property type="term" value="P:defense response to insect"/>
    <property type="evidence" value="ECO:0000270"/>
    <property type="project" value="UniProtKB"/>
</dbReference>
<dbReference type="GO" id="GO:0016102">
    <property type="term" value="P:diterpenoid biosynthetic process"/>
    <property type="evidence" value="ECO:0007669"/>
    <property type="project" value="InterPro"/>
</dbReference>
<dbReference type="GO" id="GO:0033383">
    <property type="term" value="P:geranyl diphosphate metabolic process"/>
    <property type="evidence" value="ECO:0000314"/>
    <property type="project" value="UniProtKB"/>
</dbReference>
<dbReference type="GO" id="GO:0009625">
    <property type="term" value="P:response to insect"/>
    <property type="evidence" value="ECO:0000270"/>
    <property type="project" value="UniProtKB"/>
</dbReference>
<dbReference type="GO" id="GO:0009414">
    <property type="term" value="P:response to water deprivation"/>
    <property type="evidence" value="ECO:0000270"/>
    <property type="project" value="UniProtKB"/>
</dbReference>
<dbReference type="CDD" id="cd00684">
    <property type="entry name" value="Terpene_cyclase_plant_C1"/>
    <property type="match status" value="1"/>
</dbReference>
<dbReference type="FunFam" id="1.10.600.10:FF:000007">
    <property type="entry name" value="Isoprene synthase, chloroplastic"/>
    <property type="match status" value="1"/>
</dbReference>
<dbReference type="FunFam" id="1.50.10.130:FF:000001">
    <property type="entry name" value="Isoprene synthase, chloroplastic"/>
    <property type="match status" value="1"/>
</dbReference>
<dbReference type="Gene3D" id="1.10.600.10">
    <property type="entry name" value="Farnesyl Diphosphate Synthase"/>
    <property type="match status" value="1"/>
</dbReference>
<dbReference type="Gene3D" id="1.50.10.130">
    <property type="entry name" value="Terpene synthase, N-terminal domain"/>
    <property type="match status" value="1"/>
</dbReference>
<dbReference type="InterPro" id="IPR008949">
    <property type="entry name" value="Isoprenoid_synthase_dom_sf"/>
</dbReference>
<dbReference type="InterPro" id="IPR034741">
    <property type="entry name" value="Terpene_cyclase-like_1_C"/>
</dbReference>
<dbReference type="InterPro" id="IPR044814">
    <property type="entry name" value="Terpene_cyclase_plant_C1"/>
</dbReference>
<dbReference type="InterPro" id="IPR001906">
    <property type="entry name" value="Terpene_synth_N"/>
</dbReference>
<dbReference type="InterPro" id="IPR036965">
    <property type="entry name" value="Terpene_synth_N_sf"/>
</dbReference>
<dbReference type="InterPro" id="IPR050148">
    <property type="entry name" value="Terpene_synthase-like"/>
</dbReference>
<dbReference type="InterPro" id="IPR005630">
    <property type="entry name" value="Terpene_synthase_metal-bd"/>
</dbReference>
<dbReference type="InterPro" id="IPR008930">
    <property type="entry name" value="Terpenoid_cyclase/PrenylTrfase"/>
</dbReference>
<dbReference type="PANTHER" id="PTHR31225">
    <property type="entry name" value="OS04G0344100 PROTEIN-RELATED"/>
    <property type="match status" value="1"/>
</dbReference>
<dbReference type="PANTHER" id="PTHR31225:SF9">
    <property type="entry name" value="TERPENE SYNTHASE 10"/>
    <property type="match status" value="1"/>
</dbReference>
<dbReference type="Pfam" id="PF01397">
    <property type="entry name" value="Terpene_synth"/>
    <property type="match status" value="1"/>
</dbReference>
<dbReference type="Pfam" id="PF03936">
    <property type="entry name" value="Terpene_synth_C"/>
    <property type="match status" value="1"/>
</dbReference>
<dbReference type="SFLD" id="SFLDG01019">
    <property type="entry name" value="Terpene_Cyclase_Like_1_C_Termi"/>
    <property type="match status" value="1"/>
</dbReference>
<dbReference type="SFLD" id="SFLDG01604">
    <property type="entry name" value="Terpene_Cyclase_Like_1_C_Termi"/>
    <property type="match status" value="1"/>
</dbReference>
<dbReference type="SUPFAM" id="SSF48239">
    <property type="entry name" value="Terpenoid cyclases/Protein prenyltransferases"/>
    <property type="match status" value="1"/>
</dbReference>
<dbReference type="SUPFAM" id="SSF48576">
    <property type="entry name" value="Terpenoid synthases"/>
    <property type="match status" value="1"/>
</dbReference>
<protein>
    <recommendedName>
        <fullName evidence="10">Gamma-terpinene synthase, chloroplastic</fullName>
        <ecNumber evidence="5 9">4.2.3.114</ecNumber>
    </recommendedName>
    <alternativeName>
        <fullName evidence="10">Alpha-terpinene synthase</fullName>
        <ecNumber evidence="5 9">4.2.3.115</ecNumber>
    </alternativeName>
    <alternativeName>
        <fullName evidence="10">Terpene synthase 2</fullName>
        <shortName evidence="10">OvTPS2</shortName>
    </alternativeName>
</protein>
<feature type="transit peptide" description="Chloroplast" evidence="4">
    <location>
        <begin position="1"/>
        <end position="44"/>
    </location>
</feature>
<feature type="chain" id="PRO_0000418651" description="Gamma-terpinene synthase, chloroplastic">
    <location>
        <begin position="45"/>
        <end position="594"/>
    </location>
</feature>
<feature type="region of interest" description="Homodimerization" evidence="1">
    <location>
        <begin position="353"/>
        <end position="359"/>
    </location>
</feature>
<feature type="region of interest" description="Homodimerization" evidence="1">
    <location>
        <begin position="425"/>
        <end position="462"/>
    </location>
</feature>
<feature type="short sequence motif" description="DDXXD motif" evidence="3">
    <location>
        <begin position="347"/>
        <end position="351"/>
    </location>
</feature>
<feature type="binding site" evidence="2">
    <location>
        <position position="347"/>
    </location>
    <ligand>
        <name>Mn(2+)</name>
        <dbReference type="ChEBI" id="CHEBI:29035"/>
        <label>1</label>
    </ligand>
</feature>
<feature type="binding site" evidence="2">
    <location>
        <position position="347"/>
    </location>
    <ligand>
        <name>Mn(2+)</name>
        <dbReference type="ChEBI" id="CHEBI:29035"/>
        <label>2</label>
    </ligand>
</feature>
<feature type="binding site" evidence="2">
    <location>
        <position position="351"/>
    </location>
    <ligand>
        <name>Mn(2+)</name>
        <dbReference type="ChEBI" id="CHEBI:29035"/>
        <label>1</label>
    </ligand>
</feature>
<feature type="binding site" evidence="2">
    <location>
        <position position="351"/>
    </location>
    <ligand>
        <name>Mn(2+)</name>
        <dbReference type="ChEBI" id="CHEBI:29035"/>
        <label>2</label>
    </ligand>
</feature>
<feature type="binding site" evidence="2">
    <location>
        <position position="491"/>
    </location>
    <ligand>
        <name>Mn(2+)</name>
        <dbReference type="ChEBI" id="CHEBI:29035"/>
        <label>3</label>
    </ligand>
</feature>
<feature type="binding site" evidence="2">
    <location>
        <position position="499"/>
    </location>
    <ligand>
        <name>Mn(2+)</name>
        <dbReference type="ChEBI" id="CHEBI:29035"/>
        <label>3</label>
    </ligand>
</feature>
<feature type="sequence variant" description="In strain: cv. f02-04." evidence="5">
    <original>A</original>
    <variation>V</variation>
    <location>
        <position position="103"/>
    </location>
</feature>
<feature type="sequence variant" description="In strain: cv. f02-04." evidence="5">
    <original>H</original>
    <variation>R</variation>
    <location>
        <position position="137"/>
    </location>
</feature>
<feature type="sequence variant" description="In strain: cv. f02-04." evidence="5">
    <original>DFFKNED</original>
    <variation>NFFKTEN</variation>
    <location>
        <begin position="171"/>
        <end position="177"/>
    </location>
</feature>
<feature type="sequence variant" description="In strain: cv. f02-04." evidence="5">
    <original>R</original>
    <variation>K</variation>
    <location>
        <position position="262"/>
    </location>
</feature>
<feature type="sequence variant" description="In strain: cv. f02-04." evidence="5">
    <original>I</original>
    <variation>V</variation>
    <location>
        <position position="268"/>
    </location>
</feature>
<feature type="sequence variant" description="In strain: cv. f02-04." evidence="5">
    <original>S</original>
    <variation>P</variation>
    <location>
        <position position="450"/>
    </location>
</feature>
<reference key="1">
    <citation type="journal article" date="2010" name="Plant Mol. Biol.">
        <title>Terpene synthases of oregano (Origanum vulgare L.) and their roles in the pathway and regulation of terpene biosynthesis.</title>
        <authorList>
            <person name="Crocoll C."/>
            <person name="Asbach J."/>
            <person name="Novak J."/>
            <person name="Gershenzon J."/>
            <person name="Degenhardt J."/>
        </authorList>
    </citation>
    <scope>NUCLEOTIDE SEQUENCE [MRNA]</scope>
    <scope>FUNCTION</scope>
    <scope>CATALYTIC ACTIVITY</scope>
    <scope>BIOPHYSICOCHEMICAL PROPERTIES</scope>
    <scope>COFACTOR</scope>
    <scope>TISSUE SPECIFICITY</scope>
    <scope>PATHWAY</scope>
    <source>
        <strain>cv. d06-01</strain>
        <strain>cv. f02-04</strain>
        <tissue>Trichome gland</tissue>
    </source>
</reference>
<reference key="2">
    <citation type="thesis" date="2011" institute="Friedrich Schiller University of Jena" country="Germany">
        <title>Biosynthesis of the phenolic monoterpenes, thymol and carvacrol, by terpene synthases and cytochrome P450s in oregano and thyme.</title>
        <authorList>
            <person name="Crocoll C."/>
        </authorList>
    </citation>
    <scope>FUNCTION</scope>
    <scope>CATALYTIC ACTIVITY</scope>
    <scope>BIOPHYSICOCHEMICAL PROPERTIES</scope>
    <scope>COFACTOR</scope>
    <scope>PATHWAY</scope>
</reference>
<reference key="3">
    <citation type="journal article" date="2015" name="Crit. Rev. Food Sci. Nutr.">
        <title>The bioactivity and toxicological actions of carvacrol.</title>
        <authorList>
            <person name="Suntres Z.E."/>
            <person name="Coccimiglio J."/>
            <person name="Alipour M."/>
        </authorList>
    </citation>
    <scope>REVIEW ON CARVACROL</scope>
    <scope>BIOTECHNOLOGY</scope>
</reference>
<reference key="4">
    <citation type="journal article" date="2015" name="Proc. R. Soc. B">
        <title>Plant defences against ants provide a pathway to social parasitism in butterflies.</title>
        <authorList>
            <person name="Patricelli D."/>
            <person name="Barbero F."/>
            <person name="Occhipinti A."/>
            <person name="Bertea C.M."/>
            <person name="Bonelli S."/>
            <person name="Casacci L.P."/>
            <person name="Zebelo S.A."/>
            <person name="Crocoll C."/>
            <person name="Gershenzon J."/>
            <person name="Maffei M.E."/>
            <person name="Thomas J.A."/>
            <person name="Balletto E."/>
        </authorList>
    </citation>
    <scope>FUNCTION</scope>
    <scope>INDUCTION BY MYRMICA ANTS</scope>
</reference>
<reference key="5">
    <citation type="journal article" date="2017" name="Plant Physiol. Biochem.">
        <title>Effect of prolonged water stress on essential oil content, compositions and gene expression patterns of mono- and sesquiterpene synthesis in two oregano (Origanum vulgare L.) subspecies.</title>
        <authorList>
            <person name="Morshedloo M.R."/>
            <person name="Craker L.E."/>
            <person name="Salami A."/>
            <person name="Nazeri V."/>
            <person name="Sang H."/>
            <person name="Maggi F."/>
        </authorList>
    </citation>
    <scope>INDUCTION BY DROUGHT</scope>
</reference>
<reference key="6">
    <citation type="journal article" date="2018" name="Int. J. Mol. Sci.">
        <title>Origanum vulgare Terpenoids Induce Oxidative stress and reduce the feeding activity of Spodoptera littoralis.</title>
        <authorList>
            <person name="Agliassa C."/>
            <person name="Maffei M.E."/>
        </authorList>
    </citation>
    <scope>FUNCTION</scope>
    <scope>INDUCTION BY SPODOPTERA LITTORALIS</scope>
</reference>
<reference key="7">
    <citation type="journal article" date="2018" name="Phytother. Res.">
        <title>Thymol, thyme, and other plant sources: Health and potential uses.</title>
        <authorList>
            <person name="Salehi B."/>
            <person name="Mishra A.P."/>
            <person name="Shukla I."/>
            <person name="Sharifi-Rad M."/>
            <person name="Contreras M.D.M."/>
            <person name="Segura-Carretero A."/>
            <person name="Fathi H."/>
            <person name="Nasrabadi N.N."/>
            <person name="Kobarfard F."/>
            <person name="Sharifi-Rad J."/>
        </authorList>
    </citation>
    <scope>REVIEW ON THYMOL</scope>
    <scope>BIOTECHNOLOGY</scope>
</reference>
<reference key="8">
    <citation type="journal article" date="2019" name="Nat. Prod. Res.">
        <title>Synthesis and antifungal activity of carvacrol and thymol esters with heteroaromatic carboxylic acids.</title>
        <authorList>
            <person name="Wang K."/>
            <person name="Jiang S."/>
            <person name="Yang Y."/>
            <person name="Fan L."/>
            <person name="Su F."/>
            <person name="Ye M."/>
        </authorList>
    </citation>
    <scope>REVIEW ON CARVACROL AND THYMOL</scope>
    <scope>BIOTECHNOLOGY</scope>
</reference>
<reference key="9">
    <citation type="journal article" date="2020" name="Front. Plant Sci.">
        <title>Carvacrol, a plant metabolite targeting viral protease (Mpro) and ACE2 in host cells can be a possible candidate for COVID-19.</title>
        <authorList>
            <person name="Javed H."/>
            <person name="Meeran M.F.N."/>
            <person name="Jha N.K."/>
            <person name="Ojha S."/>
        </authorList>
    </citation>
    <scope>REVIEW ON CARVACROL EFFECTS ON COVID-19</scope>
    <scope>BIOTECHNOLOGY</scope>
</reference>
<reference key="10">
    <citation type="journal article" date="2020" name="J. Biomol. Struct. Dyn.">
        <title>Identification of phytochemical inhibitors against main protease of COVID-19 using molecular modeling approaches.</title>
        <authorList>
            <person name="Kumar A."/>
            <person name="Choudhir G."/>
            <person name="Shukla S.K."/>
            <person name="Sharma M."/>
            <person name="Tyagi P."/>
            <person name="Bhushan A."/>
            <person name="Rathore M."/>
        </authorList>
    </citation>
    <scope>REVIEW ON CARVACROL EFFECTS ON COVID-19</scope>
    <scope>BIOTECHNOLOGY</scope>
</reference>
<reference key="11">
    <citation type="journal article" date="2020" name="J. Biomol. Struct. Dyn.">
        <title>Synthesis, anticholinesterase activity and molecular modeling studies of novel carvacrol-substituted amide derivatives.</title>
        <authorList>
            <person name="Zengin Kurt B."/>
            <person name="Durdagi S."/>
            <person name="Celebi G."/>
            <person name="Ekhteiari Salmas R."/>
            <person name="Sonmez F."/>
        </authorList>
    </citation>
    <scope>REVIEW ON CARVACROL DERIVATIVES</scope>
    <scope>BIOTECHNOLOGY</scope>
</reference>
<reference key="12">
    <citation type="journal article" date="2020" name="J. Mol. Struct.">
        <title>Computational evaluation of major components from plant essential oils as potent inhibitors of SARS-CoV-2 spike protein.</title>
        <authorList>
            <person name="Kulkarni S.A."/>
            <person name="Nagarajan S.K."/>
            <person name="Ramesh V."/>
            <person name="Palaniyandi V."/>
            <person name="Selvam S.P."/>
            <person name="Madhavan T."/>
        </authorList>
    </citation>
    <scope>REVIEW ON PLANT ESSENTIAL OILS EFFECTS ON COVID-19</scope>
    <scope>BIOTECHNOLOGY</scope>
</reference>
<reference key="13">
    <citation type="journal article" date="2021" name="Front. Chem.">
        <title>Antiviral essential oil components against SARS-CoV-2 in pre-procedural mouth rinses for dental settings during COVID-19: A computational study.</title>
        <authorList>
            <person name="Yadalam P.K."/>
            <person name="Varatharajan K."/>
            <person name="Rajapandian K."/>
            <person name="Chopra P."/>
            <person name="Arumuganainar D."/>
            <person name="Nagarathnam T."/>
            <person name="Sohn H."/>
            <person name="Madhavan T."/>
        </authorList>
    </citation>
    <scope>REVIEW ON PLANT ESSENTIAL OILS EFFECTS ON COVID-19</scope>
    <scope>BIOTECHNOLOGY</scope>
</reference>
<organism>
    <name type="scientific">Origanum vulgare</name>
    <name type="common">Wild marjoram</name>
    <dbReference type="NCBI Taxonomy" id="39352"/>
    <lineage>
        <taxon>Eukaryota</taxon>
        <taxon>Viridiplantae</taxon>
        <taxon>Streptophyta</taxon>
        <taxon>Embryophyta</taxon>
        <taxon>Tracheophyta</taxon>
        <taxon>Spermatophyta</taxon>
        <taxon>Magnoliopsida</taxon>
        <taxon>eudicotyledons</taxon>
        <taxon>Gunneridae</taxon>
        <taxon>Pentapetalae</taxon>
        <taxon>asterids</taxon>
        <taxon>lamiids</taxon>
        <taxon>Lamiales</taxon>
        <taxon>Lamiaceae</taxon>
        <taxon>Nepetoideae</taxon>
        <taxon>Mentheae</taxon>
        <taxon>Origanum</taxon>
    </lineage>
</organism>
<accession>E2E2P0</accession>
<accession>E2E2N9</accession>
<name>GTPS_ORIVU</name>
<keyword id="KW-0150">Chloroplast</keyword>
<keyword id="KW-0456">Lyase</keyword>
<keyword id="KW-0460">Magnesium</keyword>
<keyword id="KW-0464">Manganese</keyword>
<keyword id="KW-0479">Metal-binding</keyword>
<keyword id="KW-0934">Plastid</keyword>
<keyword id="KW-0809">Transit peptide</keyword>
<evidence type="ECO:0000250" key="1">
    <source>
        <dbReference type="UniProtKB" id="A0A0M3Q1Q3"/>
    </source>
</evidence>
<evidence type="ECO:0000250" key="2">
    <source>
        <dbReference type="UniProtKB" id="A0A1C9J6A7"/>
    </source>
</evidence>
<evidence type="ECO:0000250" key="3">
    <source>
        <dbReference type="UniProtKB" id="Q9X839"/>
    </source>
</evidence>
<evidence type="ECO:0000255" key="4"/>
<evidence type="ECO:0000269" key="5">
    <source>
    </source>
</evidence>
<evidence type="ECO:0000269" key="6">
    <source>
    </source>
</evidence>
<evidence type="ECO:0000269" key="7">
    <source>
    </source>
</evidence>
<evidence type="ECO:0000269" key="8">
    <source>
    </source>
</evidence>
<evidence type="ECO:0000269" key="9">
    <source ref="2"/>
</evidence>
<evidence type="ECO:0000303" key="10">
    <source>
    </source>
</evidence>
<evidence type="ECO:0000303" key="11">
    <source>
    </source>
</evidence>
<evidence type="ECO:0000303" key="12">
    <source>
    </source>
</evidence>
<evidence type="ECO:0000303" key="13">
    <source>
    </source>
</evidence>
<evidence type="ECO:0000303" key="14">
    <source>
    </source>
</evidence>
<evidence type="ECO:0000303" key="15">
    <source>
    </source>
</evidence>
<evidence type="ECO:0000303" key="16">
    <source>
    </source>
</evidence>
<evidence type="ECO:0000303" key="17">
    <source>
    </source>
</evidence>
<evidence type="ECO:0000303" key="18">
    <source>
    </source>
</evidence>
<evidence type="ECO:0000305" key="19"/>
<comment type="function">
    <text evidence="5 6 8 9">Involved in the biosynthesis of phenolic monoterpenes natural products thymol and carvacrol which have a broad range of biological activities acting as antimicrobial compounds, insecticides, antioxidants and pharmaceutical agents (PubMed:20419468, PubMed:26156773, PubMed:30231481, Ref.2). Monoterpene synthase which catalyzes the conversion of geranyl diphosphate (GPP) to gamma-terpinene and the minor products alpha-thujene, alpha-terpinene, myrcene, sabinene, (+)-R-limonene, alpha-pinene and alpha-phellandrene (PubMed:20419468, Ref.2).</text>
</comment>
<comment type="catalytic activity">
    <reaction evidence="5 9">
        <text>(2E)-geranyl diphosphate = gamma-terpinene + diphosphate</text>
        <dbReference type="Rhea" id="RHEA:32559"/>
        <dbReference type="ChEBI" id="CHEBI:10577"/>
        <dbReference type="ChEBI" id="CHEBI:33019"/>
        <dbReference type="ChEBI" id="CHEBI:58057"/>
        <dbReference type="EC" id="4.2.3.114"/>
    </reaction>
    <physiologicalReaction direction="left-to-right" evidence="5 9">
        <dbReference type="Rhea" id="RHEA:32560"/>
    </physiologicalReaction>
</comment>
<comment type="catalytic activity">
    <reaction evidence="5 9">
        <text>(2E)-geranyl diphosphate = alpha-terpinene + diphosphate</text>
        <dbReference type="Rhea" id="RHEA:32563"/>
        <dbReference type="ChEBI" id="CHEBI:10334"/>
        <dbReference type="ChEBI" id="CHEBI:33019"/>
        <dbReference type="ChEBI" id="CHEBI:58057"/>
        <dbReference type="EC" id="4.2.3.115"/>
    </reaction>
    <physiologicalReaction direction="left-to-right" evidence="5 9">
        <dbReference type="Rhea" id="RHEA:32564"/>
    </physiologicalReaction>
</comment>
<comment type="cofactor">
    <cofactor evidence="5 9">
        <name>Mn(2+)</name>
        <dbReference type="ChEBI" id="CHEBI:29035"/>
    </cofactor>
    <cofactor evidence="5 9">
        <name>Mg(2+)</name>
        <dbReference type="ChEBI" id="CHEBI:18420"/>
    </cofactor>
    <text evidence="5 9">Manganese &gt; magnesium.</text>
</comment>
<comment type="biophysicochemical properties">
    <kinetics>
        <KM evidence="5 9">8.71 uM for geranyl diphosphate (in the presence of 0.5 mM manganese)</KM>
        <KM evidence="5 9">0.7 mM for manganese (in the presence of 10 uM geranyl diphosphate)</KM>
        <KM evidence="5 9">3.41 mM for magnesium (in the presence of 10 uM geranyl diphosphate)</KM>
        <Vmax evidence="5 9">6.18 umol/min/g enzyme with geranyl diphosphate as substrate</Vmax>
    </kinetics>
    <phDependence>
        <text evidence="5 9">Optimum pH is 6.8.</text>
    </phDependence>
    <temperatureDependence>
        <text evidence="5 9">Optimum temperature is 28 degrees Celsius.</text>
    </temperatureDependence>
</comment>
<comment type="pathway">
    <text evidence="5 9">Secondary metabolite biosynthesis; terpenoid biosynthesis.</text>
</comment>
<comment type="subunit">
    <text evidence="1">Homodimer.</text>
</comment>
<comment type="subcellular location">
    <subcellularLocation>
        <location evidence="19">Plastid</location>
        <location evidence="19">Chloroplast</location>
    </subcellularLocation>
</comment>
<comment type="tissue specificity">
    <text evidence="5">Expressed in peltate glandular trichomes.</text>
</comment>
<comment type="induction">
    <text evidence="6 7 8">Induced by drought (PubMed:27915173). Accumulates upon root colonization by Myrmica ants (Myrmica sabuleti and Myrmica scabrinodis) concomitantly with jasmonates induction; this leads to the production of carvacrol, an attractant for the phytophagous-predaceous butterfly Maculinea arion, whose larvae initially feed on Origanum vulgare flowerheads before switching to parasitize Myrmica ant colonies for their main period of growth (PubMed:26156773). Slightly induced by Spodoptera littoralis, a herbivory insect, thus triggering the production of carvacrol, which exhibits insecticide properties (PubMed:30231481).</text>
</comment>
<comment type="domain">
    <text evidence="3">The Asp-Asp-Xaa-Xaa-Asp/Glu (DDXXD/E) motif is important for the catalytic activity, presumably through binding to Mg(2+).</text>
</comment>
<comment type="biotechnology">
    <text evidence="11 13 14 15 16 17 18">The monoterpenic phenol carvacrol is commonly used as a fragrance and a food flavoring ingredient and preservative (PubMed:24915411). Its derivatives exhibit also various biological and pharmacological properties including antioxidant, antibacterial, antifungal, insecticid, nematicid, anticancer, anti-inflammatory, hepatoprotective, spasmolytic, and vasorelaxant (PubMed:24915411, PubMed:29874939, PubMed:30836858, PubMed:33664752). Phytochemical inhibitor targeting the main SARS-CoV-2 viral protease (Mpro) and ACE2 in human host cells, carvacrol is a possible candidate for treating COVID-19 (PubMed:32448034, PubMed:33664752). Carvacrol may also have antiviral activity toward COVID-19 by binding to the S1 receptor binding domain of the SARS-CoV-2 spike (S) glycoprotein (PubMed:32834111, PubMed:33855010).</text>
</comment>
<comment type="biotechnology">
    <text evidence="12 13 16 18">The monoterpenic phenol thymol is widely used as a fragrance and a flavoring ingredient in food and cosmetic industries (PubMed:29785774). Its derivatives have also several biological and pharmacological properties such as antimicrobial, antioxidant, anticarcinogenesis, anti-inflammatory and antispasmodic activities (PubMed:29785774, PubMed:29874939). Medical applications include the treatment of disorders affecting the respiratory, nervous, and cardiovascular systems (PubMed:29785774). It may also act as a growth enhancer and immunomodulator (PubMed:29785774). Thymol may also have antiviral activity toward COVID-19 by binding to the S1 receptor binding domain of the SARS-CoV-2 spike (S) glycoprotein (PubMed:32834111, PubMed:33855010).</text>
</comment>
<comment type="similarity">
    <text evidence="19">Belongs to the terpene synthase family.</text>
</comment>
<proteinExistence type="evidence at protein level"/>
<gene>
    <name evidence="10" type="primary">TPS2</name>
</gene>
<sequence>MATLSMQVSILSKEVKNVNNIGMRASKPMVARRVSTTRLRPICSASLQVEEETRRSGNYQASIWNNDYVQSFNTNQYKDEKHLKKKEELIAQVKILLNTKMEAVKQLELIEDLRNLGLTYYFQDEVKKILTSIYNDHKCFKNEQVGDLYFTSLGFRLLRLHGFDVSEEVFDFFKNEDGSDFKASLGENIKDVLQLYEASFLIREGEVILEQARVFSTKHLEKKVDEGINDEKLLAWIRHSLALPLHWRIQRLEARWFLDAYRARKDMIPLIFELGKIDFHIIQETQLEELQEVSKWWTNSNLAEKLPFVRDRIVECYFWALGLFEPHEYGYQRKMAAIIITFVTIIDDVYDVYGTLDELQLFTDAIRKWDFQSISTLPYYMQVCYLALYTYASELAYDILKDQGFNSIAYLQRSWLSLVEGFFQEAKWYYAGYTPTLAEYLENAKVSISSPTIISQVYFTLPNSTERTVVENVFGYHNILYLSGMILRLADDLGTTQFELKRGDVQKAIQCYMKDNNATEKEGAEHVKYLLREAWKEMNTAMADPECPLSEDLVDAAANLGRASQFIYLEGDGHGVQHSEIHNQMGGLIFEPYV</sequence>